<evidence type="ECO:0000255" key="1">
    <source>
        <dbReference type="HAMAP-Rule" id="MF_01330"/>
    </source>
</evidence>
<evidence type="ECO:0000256" key="2">
    <source>
        <dbReference type="SAM" id="MobiDB-lite"/>
    </source>
</evidence>
<accession>B0Z587</accession>
<gene>
    <name evidence="1" type="primary">ycf2-A</name>
</gene>
<gene>
    <name evidence="1" type="primary">ycf2-B</name>
</gene>
<feature type="chain" id="PRO_0000343785" description="Protein Ycf2">
    <location>
        <begin position="1"/>
        <end position="2376"/>
    </location>
</feature>
<feature type="region of interest" description="Disordered" evidence="2">
    <location>
        <begin position="173"/>
        <end position="194"/>
    </location>
</feature>
<feature type="region of interest" description="Disordered" evidence="2">
    <location>
        <begin position="226"/>
        <end position="256"/>
    </location>
</feature>
<feature type="region of interest" description="Disordered" evidence="2">
    <location>
        <begin position="952"/>
        <end position="1011"/>
    </location>
</feature>
<feature type="region of interest" description="Disordered" evidence="2">
    <location>
        <begin position="1515"/>
        <end position="1534"/>
    </location>
</feature>
<feature type="region of interest" description="Disordered" evidence="2">
    <location>
        <begin position="1860"/>
        <end position="2046"/>
    </location>
</feature>
<feature type="region of interest" description="Disordered" evidence="2">
    <location>
        <begin position="2112"/>
        <end position="2230"/>
    </location>
</feature>
<feature type="compositionally biased region" description="Low complexity" evidence="2">
    <location>
        <begin position="235"/>
        <end position="245"/>
    </location>
</feature>
<feature type="compositionally biased region" description="Basic and acidic residues" evidence="2">
    <location>
        <begin position="246"/>
        <end position="255"/>
    </location>
</feature>
<feature type="compositionally biased region" description="Basic and acidic residues" evidence="2">
    <location>
        <begin position="960"/>
        <end position="1009"/>
    </location>
</feature>
<feature type="compositionally biased region" description="Acidic residues" evidence="2">
    <location>
        <begin position="1866"/>
        <end position="2025"/>
    </location>
</feature>
<feature type="compositionally biased region" description="Basic and acidic residues" evidence="2">
    <location>
        <begin position="2026"/>
        <end position="2038"/>
    </location>
</feature>
<feature type="compositionally biased region" description="Acidic residues" evidence="2">
    <location>
        <begin position="2112"/>
        <end position="2129"/>
    </location>
</feature>
<feature type="compositionally biased region" description="Acidic residues" evidence="2">
    <location>
        <begin position="2136"/>
        <end position="2213"/>
    </location>
</feature>
<feature type="binding site" evidence="1">
    <location>
        <begin position="1441"/>
        <end position="1448"/>
    </location>
    <ligand>
        <name>ATP</name>
        <dbReference type="ChEBI" id="CHEBI:30616"/>
    </ligand>
</feature>
<protein>
    <recommendedName>
        <fullName evidence="1">Protein Ycf2</fullName>
    </recommendedName>
</protein>
<organism>
    <name type="scientific">Oenothera glazioviana</name>
    <name type="common">Large-flowered evening primrose</name>
    <name type="synonym">Oenothera erythrosepala</name>
    <dbReference type="NCBI Taxonomy" id="482428"/>
    <lineage>
        <taxon>Eukaryota</taxon>
        <taxon>Viridiplantae</taxon>
        <taxon>Streptophyta</taxon>
        <taxon>Embryophyta</taxon>
        <taxon>Tracheophyta</taxon>
        <taxon>Spermatophyta</taxon>
        <taxon>Magnoliopsida</taxon>
        <taxon>eudicotyledons</taxon>
        <taxon>Gunneridae</taxon>
        <taxon>Pentapetalae</taxon>
        <taxon>rosids</taxon>
        <taxon>malvids</taxon>
        <taxon>Myrtales</taxon>
        <taxon>Onagraceae</taxon>
        <taxon>Onagroideae</taxon>
        <taxon>Onagreae</taxon>
        <taxon>Oenothera</taxon>
    </lineage>
</organism>
<sequence>MGNQRNRVNLNPFRFWVFELREILREIKNYRYLGNYRYFGPLGSFIHIFVHQERFLKLLDPRIWSVLRSQGSTGVVLFLVAVLIYRINNRNMIERKNIYLTGLLPIPTNFAGPRNETLEESFLSSNINRLIVSLLHLPKGKRLSESCFLDPKESTRVLPITKWRNWIGKRRDSSQLKGSSDQSRDHFDSIGTEDSEYHTLINQREIQQRKERSSLLDPSFLQTERTEIESDRFSKGLSGSSSKSRLFTEGEKEMNNHLPPEEIEEFLGNPTRSILSFFSDEWSELHLGSNPTERSTVDQKLLKKEQEVSFAPFRRSETKEIVNLFKTMAYLQKTVSIHPISSDPGCDMVPKDELDSEERFQEMADLFTLSITEPDLVYHKGFAFSIDSSVLDQKQFLAEARDESKKKSLLVLPPVFYQENESFYRRIRKRGVQISCGNDLEDPKPKIVVFASNNIVEAVNQYRWIRNLIQIQYSTHGYIRNVLNRFFLMNRSDRNFEYGIQRDQIGNDTLNHRTFMKYTINQHLSNLKKSQKKGSDPLILISRTERSVNRDPNAYRYKWSKGSKNFQEHLEHFVSEQKSRFQVVFDRYRSIRNRYRSIRNRYRSRINQYSSDRSEVSDKKDNRYRSRINQYSSDRSEVSDQKNLAKFRSFVFSKLLLFLSNSLPFFFVSFGNTPPIQRSEIRVSELKGPNDRLCNQFLESIGLQLVYLKKLKPFLLDDHETSQKSKLLFNKKPEGMIDSFHTRNNRGKSLDSYFSMISHDQDNWLNPVKPFHRSSLISSFYKANRLRFLNNPHDFGFFCNKRFPFYVDIKNLDFTYGQFLNILFIRNTKFSLCGDKKKHAFLERDTISSIESQVSNLFKDFPQSGDERYNFYKYFHLAMRSDPLVRRAIYSIADISGTPLTEGQRVNFERTYCQPLSDMNLSDSEGKNLYQYLNFNSNMGLIYSEKCFSSEKRKKKKPEKRKEKKPEKRKEKKPEKRKEKKPEKRKEKKPEKRKEKKPEKRKEKKPEKRKEKKQSLYLKQWVEKVQRDRALQGERVSLILSNWNLFKTYVMPFSLTSTGYNLLKLMFLDTLGSYVMPLLRSSPKFVSICYAISDPCGISWRILQKKLCLLQWNWISAISNKCFHKLLLSEESIHRNNESPSMTDLRWPNLGEFLYSILFLLLVAGHLVFSHLLFFSQAFSELQRDFARAQSLMIPSYIVELRELLDMYPAPRSFKKLFLAAREKLVNYLRWGGGRKSFLIHLFELLNITPNPIDRIAFLKNTRHLSHTSKELYSLITELGDFSSLCSGQRYRYDQIIENVNGPCCLIDDKIESWISNCDAIEDKEREFLVPFCNFTRETRIDQILLSLTHSDHLSNNDSASQMSEEPGAFYLRHLVDIHKKGLMNYECNTSCLAERRIFLAHYQTITYSPCGDNRSHFPSHGKTFSLRLPLHPSRATLVIGSIGSGRSYLVKSLATNSYVPLITVVLNKFLKNWTPQGFDIHESGVYDEYGDDAEEANDYGASFFDFLDNDSDDYEDRDSDDYDEPGASDDYEPGDMEDFVDSEMTEWLTKTNVPLVYQLLDDEIDEFYITLQFELAKAMSPCILWIPNIHDLDAKESDYLSLGLLVNHLSRDCGRRSTKNEILVIASTHIPQKVDPSLIGPDGLSTCIKTRRLLVPQQQQCLFTLSYTRGFHLENKMFHTHTNEFESTILGPSVPDLVALTNEALSISITQKKSIIDTTTIRYALHRKTWDLEADRNLSPAKEHGTLFYQVGRAFAHTVLLRNCPIDPISIYIKKNLCEAGDSSLYKWYFELGTSMKKLTILLYLLTCSAGSIAQDLLSPPGPDEQNLITSYGLVENDSDLVHGLSDIVHGLLELEGALVGSSPTEEEVEGTEEEVEGTEEEVEGTEDEEVEGTEEEVEGTEEEVEGTEEEVEGTEDEEVEGTEEEVEGTEDEEGEGTEEEVEGTEEEVEGTEDEEGEGTEEEVEGTEEEVEGTEDEEGEGTEEEVEGTEEEVEGTEEEVEGTEEEVEGTEDEEGEGTEDEEGEGTEKDSSQFDNDRVTLLLRPKPRNPLDIQRLIYQHQKYESELEEDDDDDEDVFAPQKMLEDLFSELVWSPRIWHPWDFILDCEAEIPAEEIPEEEDPLPEEALETEVAVWGEEEEGEADDEEDERLEAQQEDELLEEEDEELKEEEDELHEEEEEEEEEEEEEEEEEDELHEEEEEEEEEDELQENDSEFFRSETQQPQARDGFSEEEGCFRISQFMWVPGDPLSFLYKDTPFVEVLSYPEEATEISKELLRLLNPKTKRDAPKRARQRWWTKKKQDKHYELVLDRQRWLITKSSLSKSNGFFRSNTPSESYQYLSNLFLSNRRLLDQITKTFFRKKWLFPDEMKIGFMEQ</sequence>
<reference key="1">
    <citation type="journal article" date="2008" name="Nucleic Acids Res.">
        <title>The complete nucleotide sequences of the five genetically distinct plastid genomes of Oenothera, subsection Oenothera: I. Sequence evaluation and plastome evolution.</title>
        <authorList>
            <person name="Greiner S."/>
            <person name="Wang X."/>
            <person name="Rauwolf U."/>
            <person name="Silber M.V."/>
            <person name="Mayer K."/>
            <person name="Meurer J."/>
            <person name="Haberer G."/>
            <person name="Herrmann R.G."/>
        </authorList>
    </citation>
    <scope>NUCLEOTIDE SEQUENCE [LARGE SCALE GENOMIC DNA]</scope>
    <source>
        <strain>cv. Rr-lamarckiana Sweden</strain>
    </source>
</reference>
<keyword id="KW-0067">ATP-binding</keyword>
<keyword id="KW-0150">Chloroplast</keyword>
<keyword id="KW-0547">Nucleotide-binding</keyword>
<keyword id="KW-0934">Plastid</keyword>
<geneLocation type="chloroplast"/>
<comment type="function">
    <text evidence="1">Probable ATPase of unknown function. Its presence in a non-photosynthetic plant (Epifagus virginiana) and experiments in tobacco indicate that it has an essential function which is probably not related to photosynthesis.</text>
</comment>
<comment type="subcellular location">
    <subcellularLocation>
        <location evidence="1">Plastid</location>
        <location evidence="1">Chloroplast stroma</location>
    </subcellularLocation>
</comment>
<comment type="similarity">
    <text evidence="1">Belongs to the Ycf2 family.</text>
</comment>
<name>YCF2_OENGL</name>
<proteinExistence type="inferred from homology"/>
<dbReference type="EMBL" id="EU262890">
    <property type="protein sequence ID" value="ABX10080.1"/>
    <property type="molecule type" value="Genomic_DNA"/>
</dbReference>
<dbReference type="EMBL" id="EU262890">
    <property type="protein sequence ID" value="ABX10097.1"/>
    <property type="molecule type" value="Genomic_DNA"/>
</dbReference>
<dbReference type="GO" id="GO:0009570">
    <property type="term" value="C:chloroplast stroma"/>
    <property type="evidence" value="ECO:0007669"/>
    <property type="project" value="UniProtKB-SubCell"/>
</dbReference>
<dbReference type="GO" id="GO:0005524">
    <property type="term" value="F:ATP binding"/>
    <property type="evidence" value="ECO:0007669"/>
    <property type="project" value="UniProtKB-KW"/>
</dbReference>
<dbReference type="GO" id="GO:0016887">
    <property type="term" value="F:ATP hydrolysis activity"/>
    <property type="evidence" value="ECO:0007669"/>
    <property type="project" value="InterPro"/>
</dbReference>
<dbReference type="CDD" id="cd19505">
    <property type="entry name" value="RecA-like_Ycf2"/>
    <property type="match status" value="1"/>
</dbReference>
<dbReference type="Gene3D" id="3.40.50.300">
    <property type="entry name" value="P-loop containing nucleotide triphosphate hydrolases"/>
    <property type="match status" value="1"/>
</dbReference>
<dbReference type="HAMAP" id="MF_01330">
    <property type="entry name" value="Ycf2"/>
    <property type="match status" value="1"/>
</dbReference>
<dbReference type="InterPro" id="IPR003593">
    <property type="entry name" value="AAA+_ATPase"/>
</dbReference>
<dbReference type="InterPro" id="IPR027417">
    <property type="entry name" value="P-loop_NTPase"/>
</dbReference>
<dbReference type="InterPro" id="IPR008543">
    <property type="entry name" value="Uncharacterised_Ycf2"/>
</dbReference>
<dbReference type="InterPro" id="IPR056777">
    <property type="entry name" value="Ycf2_N"/>
</dbReference>
<dbReference type="PANTHER" id="PTHR33078:SF92">
    <property type="entry name" value="PROTEIN YCF2"/>
    <property type="match status" value="1"/>
</dbReference>
<dbReference type="PANTHER" id="PTHR33078">
    <property type="entry name" value="PROTEIN YCF2-RELATED"/>
    <property type="match status" value="1"/>
</dbReference>
<dbReference type="Pfam" id="PF05695">
    <property type="entry name" value="Ycf2"/>
    <property type="match status" value="4"/>
</dbReference>
<dbReference type="SMART" id="SM00382">
    <property type="entry name" value="AAA"/>
    <property type="match status" value="1"/>
</dbReference>
<dbReference type="SUPFAM" id="SSF52540">
    <property type="entry name" value="P-loop containing nucleoside triphosphate hydrolases"/>
    <property type="match status" value="1"/>
</dbReference>